<feature type="chain" id="PRO_0000060449" description="tRNA (guanine-N(1)-)-methyltransferase">
    <location>
        <begin position="1"/>
        <end position="255"/>
    </location>
</feature>
<feature type="binding site" evidence="1">
    <location>
        <position position="113"/>
    </location>
    <ligand>
        <name>S-adenosyl-L-methionine</name>
        <dbReference type="ChEBI" id="CHEBI:59789"/>
    </ligand>
</feature>
<feature type="binding site" evidence="1">
    <location>
        <begin position="133"/>
        <end position="138"/>
    </location>
    <ligand>
        <name>S-adenosyl-L-methionine</name>
        <dbReference type="ChEBI" id="CHEBI:59789"/>
    </ligand>
</feature>
<gene>
    <name type="primary">trmD</name>
    <name type="ordered locus">STY2861</name>
    <name type="ordered locus">t2629</name>
</gene>
<name>TRMD_SALTI</name>
<protein>
    <recommendedName>
        <fullName>tRNA (guanine-N(1)-)-methyltransferase</fullName>
        <ecNumber>2.1.1.228</ecNumber>
    </recommendedName>
    <alternativeName>
        <fullName>M1G-methyltransferase</fullName>
    </alternativeName>
    <alternativeName>
        <fullName>tRNA [GM37] methyltransferase</fullName>
    </alternativeName>
</protein>
<proteinExistence type="inferred from homology"/>
<reference key="1">
    <citation type="journal article" date="2001" name="Nature">
        <title>Complete genome sequence of a multiple drug resistant Salmonella enterica serovar Typhi CT18.</title>
        <authorList>
            <person name="Parkhill J."/>
            <person name="Dougan G."/>
            <person name="James K.D."/>
            <person name="Thomson N.R."/>
            <person name="Pickard D."/>
            <person name="Wain J."/>
            <person name="Churcher C.M."/>
            <person name="Mungall K.L."/>
            <person name="Bentley S.D."/>
            <person name="Holden M.T.G."/>
            <person name="Sebaihia M."/>
            <person name="Baker S."/>
            <person name="Basham D."/>
            <person name="Brooks K."/>
            <person name="Chillingworth T."/>
            <person name="Connerton P."/>
            <person name="Cronin A."/>
            <person name="Davis P."/>
            <person name="Davies R.M."/>
            <person name="Dowd L."/>
            <person name="White N."/>
            <person name="Farrar J."/>
            <person name="Feltwell T."/>
            <person name="Hamlin N."/>
            <person name="Haque A."/>
            <person name="Hien T.T."/>
            <person name="Holroyd S."/>
            <person name="Jagels K."/>
            <person name="Krogh A."/>
            <person name="Larsen T.S."/>
            <person name="Leather S."/>
            <person name="Moule S."/>
            <person name="O'Gaora P."/>
            <person name="Parry C."/>
            <person name="Quail M.A."/>
            <person name="Rutherford K.M."/>
            <person name="Simmonds M."/>
            <person name="Skelton J."/>
            <person name="Stevens K."/>
            <person name="Whitehead S."/>
            <person name="Barrell B.G."/>
        </authorList>
    </citation>
    <scope>NUCLEOTIDE SEQUENCE [LARGE SCALE GENOMIC DNA]</scope>
    <source>
        <strain>CT18</strain>
    </source>
</reference>
<reference key="2">
    <citation type="journal article" date="2003" name="J. Bacteriol.">
        <title>Comparative genomics of Salmonella enterica serovar Typhi strains Ty2 and CT18.</title>
        <authorList>
            <person name="Deng W."/>
            <person name="Liou S.-R."/>
            <person name="Plunkett G. III"/>
            <person name="Mayhew G.F."/>
            <person name="Rose D.J."/>
            <person name="Burland V."/>
            <person name="Kodoyianni V."/>
            <person name="Schwartz D.C."/>
            <person name="Blattner F.R."/>
        </authorList>
    </citation>
    <scope>NUCLEOTIDE SEQUENCE [LARGE SCALE GENOMIC DNA]</scope>
    <source>
        <strain>ATCC 700931 / Ty2</strain>
    </source>
</reference>
<organism>
    <name type="scientific">Salmonella typhi</name>
    <dbReference type="NCBI Taxonomy" id="90370"/>
    <lineage>
        <taxon>Bacteria</taxon>
        <taxon>Pseudomonadati</taxon>
        <taxon>Pseudomonadota</taxon>
        <taxon>Gammaproteobacteria</taxon>
        <taxon>Enterobacterales</taxon>
        <taxon>Enterobacteriaceae</taxon>
        <taxon>Salmonella</taxon>
    </lineage>
</organism>
<sequence>MFIGIVSLFPEMFRAITDYGVTGRAVKKGLLNIQSWSPRDFAHDRHRTVDDRPYGGGPGMLMMVQPLRDAIHAAKAAAGEGAKVIYLSPQGRKLDQAGVSELATNQKLILVCGRYEGVDERVIQAEIDEEWSIGDYVLSGGELPAMTLIDSVARFIPGVLGHEASAIEDSFADGLLDCPHYTRPEVLEGMEVPPVLLSGNHAEIRRWRLKQSLGRTWLRRPELLENLALTEEQARLLAEFKTEHAQQQHKHDGMA</sequence>
<accession>Q8Z4I5</accession>
<keyword id="KW-0963">Cytoplasm</keyword>
<keyword id="KW-0489">Methyltransferase</keyword>
<keyword id="KW-0949">S-adenosyl-L-methionine</keyword>
<keyword id="KW-0808">Transferase</keyword>
<keyword id="KW-0819">tRNA processing</keyword>
<comment type="function">
    <text evidence="1">Specifically methylates guanosine-37 in various tRNAs.</text>
</comment>
<comment type="catalytic activity">
    <reaction>
        <text>guanosine(37) in tRNA + S-adenosyl-L-methionine = N(1)-methylguanosine(37) in tRNA + S-adenosyl-L-homocysteine + H(+)</text>
        <dbReference type="Rhea" id="RHEA:36899"/>
        <dbReference type="Rhea" id="RHEA-COMP:10145"/>
        <dbReference type="Rhea" id="RHEA-COMP:10147"/>
        <dbReference type="ChEBI" id="CHEBI:15378"/>
        <dbReference type="ChEBI" id="CHEBI:57856"/>
        <dbReference type="ChEBI" id="CHEBI:59789"/>
        <dbReference type="ChEBI" id="CHEBI:73542"/>
        <dbReference type="ChEBI" id="CHEBI:74269"/>
        <dbReference type="EC" id="2.1.1.228"/>
    </reaction>
</comment>
<comment type="subunit">
    <text evidence="1">Homodimer.</text>
</comment>
<comment type="subcellular location">
    <subcellularLocation>
        <location evidence="2">Cytoplasm</location>
    </subcellularLocation>
</comment>
<comment type="similarity">
    <text evidence="2">Belongs to the RNA methyltransferase TrmD family.</text>
</comment>
<evidence type="ECO:0000250" key="1"/>
<evidence type="ECO:0000305" key="2"/>
<dbReference type="EC" id="2.1.1.228"/>
<dbReference type="EMBL" id="AL513382">
    <property type="protein sequence ID" value="CAD05853.1"/>
    <property type="molecule type" value="Genomic_DNA"/>
</dbReference>
<dbReference type="EMBL" id="AE014613">
    <property type="protein sequence ID" value="AAO70200.1"/>
    <property type="molecule type" value="Genomic_DNA"/>
</dbReference>
<dbReference type="RefSeq" id="NP_457144.1">
    <property type="nucleotide sequence ID" value="NC_003198.1"/>
</dbReference>
<dbReference type="RefSeq" id="WP_000469802.1">
    <property type="nucleotide sequence ID" value="NZ_WSUR01000036.1"/>
</dbReference>
<dbReference type="SMR" id="Q8Z4I5"/>
<dbReference type="STRING" id="220341.gene:17586757"/>
<dbReference type="KEGG" id="stt:t2629"/>
<dbReference type="KEGG" id="sty:STY2861"/>
<dbReference type="PATRIC" id="fig|220341.7.peg.2911"/>
<dbReference type="eggNOG" id="COG0336">
    <property type="taxonomic scope" value="Bacteria"/>
</dbReference>
<dbReference type="HOGENOM" id="CLU_047363_0_1_6"/>
<dbReference type="OMA" id="ILCGHYK"/>
<dbReference type="OrthoDB" id="9807416at2"/>
<dbReference type="Proteomes" id="UP000000541">
    <property type="component" value="Chromosome"/>
</dbReference>
<dbReference type="Proteomes" id="UP000002670">
    <property type="component" value="Chromosome"/>
</dbReference>
<dbReference type="GO" id="GO:0005829">
    <property type="term" value="C:cytosol"/>
    <property type="evidence" value="ECO:0007669"/>
    <property type="project" value="TreeGrafter"/>
</dbReference>
<dbReference type="GO" id="GO:0052906">
    <property type="term" value="F:tRNA (guanine(37)-N1)-methyltransferase activity"/>
    <property type="evidence" value="ECO:0007669"/>
    <property type="project" value="UniProtKB-UniRule"/>
</dbReference>
<dbReference type="GO" id="GO:0002939">
    <property type="term" value="P:tRNA N1-guanine methylation"/>
    <property type="evidence" value="ECO:0007669"/>
    <property type="project" value="TreeGrafter"/>
</dbReference>
<dbReference type="CDD" id="cd18080">
    <property type="entry name" value="TrmD-like"/>
    <property type="match status" value="1"/>
</dbReference>
<dbReference type="FunFam" id="1.10.1270.20:FF:000001">
    <property type="entry name" value="tRNA (guanine-N(1)-)-methyltransferase"/>
    <property type="match status" value="1"/>
</dbReference>
<dbReference type="FunFam" id="3.40.1280.10:FF:000001">
    <property type="entry name" value="tRNA (guanine-N(1)-)-methyltransferase"/>
    <property type="match status" value="1"/>
</dbReference>
<dbReference type="Gene3D" id="3.40.1280.10">
    <property type="match status" value="1"/>
</dbReference>
<dbReference type="Gene3D" id="1.10.1270.20">
    <property type="entry name" value="tRNA(m1g37)methyltransferase, domain 2"/>
    <property type="match status" value="1"/>
</dbReference>
<dbReference type="HAMAP" id="MF_00605">
    <property type="entry name" value="TrmD"/>
    <property type="match status" value="1"/>
</dbReference>
<dbReference type="InterPro" id="IPR029028">
    <property type="entry name" value="Alpha/beta_knot_MTases"/>
</dbReference>
<dbReference type="InterPro" id="IPR023148">
    <property type="entry name" value="tRNA_m1G_MeTrfase_C_sf"/>
</dbReference>
<dbReference type="InterPro" id="IPR002649">
    <property type="entry name" value="tRNA_m1G_MeTrfase_TrmD"/>
</dbReference>
<dbReference type="InterPro" id="IPR029026">
    <property type="entry name" value="tRNA_m1G_MTases_N"/>
</dbReference>
<dbReference type="InterPro" id="IPR016009">
    <property type="entry name" value="tRNA_MeTrfase_TRMD/TRM10"/>
</dbReference>
<dbReference type="NCBIfam" id="NF000648">
    <property type="entry name" value="PRK00026.1"/>
    <property type="match status" value="1"/>
</dbReference>
<dbReference type="NCBIfam" id="TIGR00088">
    <property type="entry name" value="trmD"/>
    <property type="match status" value="1"/>
</dbReference>
<dbReference type="PANTHER" id="PTHR46417">
    <property type="entry name" value="TRNA (GUANINE-N(1)-)-METHYLTRANSFERASE"/>
    <property type="match status" value="1"/>
</dbReference>
<dbReference type="PANTHER" id="PTHR46417:SF1">
    <property type="entry name" value="TRNA (GUANINE-N(1)-)-METHYLTRANSFERASE"/>
    <property type="match status" value="1"/>
</dbReference>
<dbReference type="Pfam" id="PF01746">
    <property type="entry name" value="tRNA_m1G_MT"/>
    <property type="match status" value="1"/>
</dbReference>
<dbReference type="PIRSF" id="PIRSF000386">
    <property type="entry name" value="tRNA_mtase"/>
    <property type="match status" value="1"/>
</dbReference>
<dbReference type="SUPFAM" id="SSF75217">
    <property type="entry name" value="alpha/beta knot"/>
    <property type="match status" value="1"/>
</dbReference>